<accession>Q03761</accession>
<accession>D6VSC8</accession>
<proteinExistence type="evidence at protein level"/>
<feature type="initiator methionine" description="Removed" evidence="35">
    <location>
        <position position="1"/>
    </location>
</feature>
<feature type="chain" id="PRO_0000118909" description="SAGA complex/transcription factor TFIID complex subunit TAF12">
    <location>
        <begin position="2"/>
        <end position="539"/>
    </location>
</feature>
<feature type="domain" description="Histone-fold">
    <location>
        <begin position="413"/>
        <end position="490"/>
    </location>
</feature>
<feature type="region of interest" description="Disordered" evidence="2">
    <location>
        <begin position="1"/>
        <end position="28"/>
    </location>
</feature>
<feature type="region of interest" description="Disordered" evidence="2">
    <location>
        <begin position="86"/>
        <end position="129"/>
    </location>
</feature>
<feature type="region of interest" description="Disordered" evidence="2">
    <location>
        <begin position="274"/>
        <end position="332"/>
    </location>
</feature>
<feature type="coiled-coil region" evidence="1">
    <location>
        <begin position="153"/>
        <end position="202"/>
    </location>
</feature>
<feature type="coiled-coil region" evidence="1">
    <location>
        <begin position="239"/>
        <end position="285"/>
    </location>
</feature>
<feature type="compositionally biased region" description="Low complexity" evidence="2">
    <location>
        <begin position="7"/>
        <end position="27"/>
    </location>
</feature>
<feature type="compositionally biased region" description="Low complexity" evidence="2">
    <location>
        <begin position="87"/>
        <end position="105"/>
    </location>
</feature>
<feature type="compositionally biased region" description="Low complexity" evidence="2">
    <location>
        <begin position="274"/>
        <end position="283"/>
    </location>
</feature>
<feature type="compositionally biased region" description="Polar residues" evidence="2">
    <location>
        <begin position="284"/>
        <end position="294"/>
    </location>
</feature>
<feature type="compositionally biased region" description="Polar residues" evidence="2">
    <location>
        <begin position="310"/>
        <end position="332"/>
    </location>
</feature>
<feature type="modified residue" description="N-acetylserine" evidence="35">
    <location>
        <position position="2"/>
    </location>
</feature>
<feature type="modified residue" description="Phosphoserine" evidence="33 34">
    <location>
        <position position="129"/>
    </location>
</feature>
<feature type="modified residue" description="Phosphoserine" evidence="32 34">
    <location>
        <position position="286"/>
    </location>
</feature>
<feature type="strand" evidence="36">
    <location>
        <begin position="387"/>
        <end position="392"/>
    </location>
</feature>
<feature type="strand" evidence="36">
    <location>
        <begin position="394"/>
        <end position="398"/>
    </location>
</feature>
<feature type="strand" evidence="36">
    <location>
        <begin position="400"/>
        <end position="402"/>
    </location>
</feature>
<feature type="helix" evidence="37">
    <location>
        <begin position="419"/>
        <end position="427"/>
    </location>
</feature>
<feature type="strand" evidence="37">
    <location>
        <begin position="436"/>
        <end position="438"/>
    </location>
</feature>
<feature type="helix" evidence="37">
    <location>
        <begin position="440"/>
        <end position="467"/>
    </location>
</feature>
<feature type="strand" evidence="37">
    <location>
        <begin position="471"/>
        <end position="473"/>
    </location>
</feature>
<feature type="helix" evidence="37">
    <location>
        <begin position="475"/>
        <end position="484"/>
    </location>
</feature>
<feature type="strand" evidence="37">
    <location>
        <begin position="492"/>
        <end position="494"/>
    </location>
</feature>
<feature type="helix" evidence="37">
    <location>
        <begin position="508"/>
        <end position="523"/>
    </location>
</feature>
<sequence length="539" mass="61073">MSSNPENSGVNANNNTGTGNADAITGAQQNMVLQPRQLQEMAAKFRTLLTEARNVGETTPRGKELMFQAAKIKQVYDALTLNRRRQQAAQAYNNTSNSNSSNPASIPTENVPNSSQQQQQQQQQTRNNSNKFSNMIKQVLTPEENQEYEKLWQNFQVRHTSIKEKETYLKQNIDRLEQEINKQTDEGPKQQLQEKKIELLNDWKVLKIEYTKLFNNYQNSKKTFYVECARHNPALHKFLQESTQQQRVQQQRVQQQQQQQQQQQQQQQQQQQQQQQRQGQNQRKISSSNSTEIPSVTGPDALKSQQQQQNTITATNNPRGNVNTSQTEQSKAKVTNVNATASMLNNISSSKSAIFKQTEPAIPISENISTKTPAPVAYRSNRPTITGGSAMNASALNTPATTKLPPYEMDTQRVMSKRKLRELVKTVGIDEGDGETVIDGDVEELLLDLADDFVTNVTAFSCRLAKHRKSDNLEARDIQLHLERNWNIRIPGYSADEIRSTRKWNPSQNYNQKLQSITSDKVAAAKNNGNNVASLNTKK</sequence>
<gene>
    <name type="primary">TAF12</name>
    <name type="synonym">TAF61</name>
    <name type="synonym">TAF68</name>
    <name type="ordered locus">YDR145W</name>
    <name type="ORF">YD8358.02</name>
</gene>
<comment type="function">
    <text evidence="3 4 5 6 7 10 11 12 13 14 15 16 19 22 23 24 25 26">Functions as a component of both the DNA-binding general transcription initiation factor complex TFIID and the transcription coactivator SAGA complex (PubMed:10788514, PubMed:12052880, PubMed:12138208, PubMed:25216679). Binding of TFIID to a promoter (with or without TATA element) is the initial step in pre-initiation complex (PIC) formation. TFIID plays a key role in the regulation of gene expression by RNA polymerase II through different activities such as transcription activator interaction, core promoter recognition and selectivity, TFIIA and TFIIB interaction, chromatin modification (histone acetylation by TAF1), facilitation of DNA opening and initiation of transcription (PubMed:10751405, PubMed:11238921, PubMed:12516863, PubMed:15448131). SAGA acts as a general cofactor required for essentially all RNA polymerase II transcription (PubMed:10864329, PubMed:25216679, PubMed:9674426). At the promoters, SAGA is required for transcription pre-initiation complex (PIC) recruitment. It influences RNA polymerase II transcriptional activity through different activities such as TBP interaction (via core/TAF module) and promoter selectivity, interaction with transcription activators (via Tra1/SPT module), and chromatin modification through histone acetylation (via HAT module) and deubiquitination (via DUB module) (PubMed:12501245, PubMed:12840001, PubMed:31969703). SAGA preferentially acetylates histones H3 (to form H3K9ac, H3K14ac, H3K18ac and H3K23ac) and H2B and deubiquitinates histone H2B (PubMed:10026213). SAGA interacts with DNA via upstream activating sequences (UASs) (PubMed:28918903). Also identified in a modified version of SAGA named SALSA or SLIK (PubMed:12186975, PubMed:12446794). The cleavage of SPT7 and the absence of the SPT8 subunit in SLIK neither drive any major conformational differences in its structure compared with SAGA, nor significantly affect HAT, DUB, or DNA-binding activities (PubMed:33864814).</text>
</comment>
<comment type="subunit">
    <text evidence="5 8 9 10 12 13 19 20 21 22 24 25 26 27">Component of the 1.8 MDa SAGA (Spt-Ada-Gcn5 acetyltransferase) complex, which is composed of 19 subunits TRA1, SPT7, TAF5, NGG1/ADA3, SGF73, SPT20/ADA5, SPT8, TAF12, TAF6, HFI1/ADA1, UBP8, GCN5, ADA2, SPT3, SGF29, TAF10, TAF9, SGF11 and SUS1 (PubMed:12052880, PubMed:31969703, PubMed:9674426). The SAGA complex is composed of 4 modules, namely the HAT (histone acetyltransferase) module (GCN5, ADA2, NGG1/ADA3 and SGF29), the DUB (deubiquitinating) module (UBP8, SGF11, SGF73 and SUS1), the core or TAF (TBP-associated factor) module (TAF5, TAF6, TAF9, TAF10 and TAF12), and the Tra1 or SPT (Suppressor of Ty) module (TRA1, HFI1/ADA1, SPT3, SPT7, SPT8 and SPT20/ADA5). The Tra1/SPT module binds activators, the core module recruits TBP (TATA-binding protein), the HAT module contains the histone H3 acetyltransferase GCN5, and the DUB module comprises the histone H2B deubiquitinase UBP8 (PubMed:21734642, PubMed:25216679, PubMed:31969703). Also identified in an altered form of SAGA, named SALSA (SAGA altered, Spt8 absent) or SLIK (SAGA-like) complex, which contains a C-terminal truncated form of SPT7 and is missing SPT8 (PubMed:12186975, PubMed:12446794, PubMed:15647753). However, it has been shown that the SAGA and SAGA-like SALSA/SLIK transcriptional coactivators are structurally and biochemically equivalent (PubMed:33864814). Component of the 1.2 MDa TFIID complex, which is composed of TATA-binding protein (TBP) and the 14 TBP-associated factors (TAFs). It comprises 1 copy of each TAF1, TAF2, TAF3, TAF7, TAF8, TAF11, TAF13, 2 copies of each TAF4, TAF5, TAF6, TAF9, TAF10, TAF12, and 3 copies of TAF14. In TFIID, TAF12 heterodimerizes with TAF4, forming ultimately an octamer consisting of a TAF6-TAF9 heterotetramer core flanked by TAF4-TAF12 dimers on either side, similar to the histone H2A-H2B-H3-H4 octamer (PubMed:10788514, PubMed:11295558, PubMed:11473260, PubMed:15448131, PubMed:9695952).</text>
</comment>
<comment type="interaction">
    <interactant intactId="EBI-35097">
        <id>Q03761</id>
    </interactant>
    <interactant intactId="EBI-3493">
        <id>P35817</id>
        <label>BDF1</label>
    </interactant>
    <organismsDiffer>false</organismsDiffer>
    <experiments>2</experiments>
</comment>
<comment type="interaction">
    <interactant intactId="EBI-35097">
        <id>Q03761</id>
    </interactant>
    <interactant intactId="EBI-8287">
        <id>Q12060</id>
        <label>HFI1</label>
    </interactant>
    <organismsDiffer>false</organismsDiffer>
    <experiments>11</experiments>
</comment>
<comment type="interaction">
    <interactant intactId="EBI-35097">
        <id>Q03761</id>
    </interactant>
    <interactant intactId="EBI-18889">
        <id>Q12030</id>
        <label>TAF10</label>
    </interactant>
    <organismsDiffer>false</organismsDiffer>
    <experiments>11</experiments>
</comment>
<comment type="interaction">
    <interactant intactId="EBI-35097">
        <id>Q03761</id>
    </interactant>
    <interactant intactId="EBI-35097">
        <id>Q03761</id>
        <label>TAF12</label>
    </interactant>
    <organismsDiffer>false</organismsDiffer>
    <experiments>4</experiments>
</comment>
<comment type="interaction">
    <interactant intactId="EBI-35097">
        <id>Q03761</id>
    </interactant>
    <interactant intactId="EBI-11231">
        <id>P50105</id>
        <label>TAF4</label>
    </interactant>
    <organismsDiffer>false</organismsDiffer>
    <experiments>14</experiments>
</comment>
<comment type="subcellular location">
    <subcellularLocation>
        <location evidence="17">Nucleus</location>
    </subcellularLocation>
</comment>
<comment type="miscellaneous">
    <text evidence="18">Present with 930 (+/-45) molecules/cell in log phase SD medium.</text>
</comment>
<comment type="similarity">
    <text evidence="28">Belongs to the TAF12 family.</text>
</comment>
<organism>
    <name type="scientific">Saccharomyces cerevisiae (strain ATCC 204508 / S288c)</name>
    <name type="common">Baker's yeast</name>
    <dbReference type="NCBI Taxonomy" id="559292"/>
    <lineage>
        <taxon>Eukaryota</taxon>
        <taxon>Fungi</taxon>
        <taxon>Dikarya</taxon>
        <taxon>Ascomycota</taxon>
        <taxon>Saccharomycotina</taxon>
        <taxon>Saccharomycetes</taxon>
        <taxon>Saccharomycetales</taxon>
        <taxon>Saccharomycetaceae</taxon>
        <taxon>Saccharomyces</taxon>
    </lineage>
</organism>
<reference key="1">
    <citation type="journal article" date="1997" name="Nature">
        <title>The nucleotide sequence of Saccharomyces cerevisiae chromosome IV.</title>
        <authorList>
            <person name="Jacq C."/>
            <person name="Alt-Moerbe J."/>
            <person name="Andre B."/>
            <person name="Arnold W."/>
            <person name="Bahr A."/>
            <person name="Ballesta J.P.G."/>
            <person name="Bargues M."/>
            <person name="Baron L."/>
            <person name="Becker A."/>
            <person name="Biteau N."/>
            <person name="Bloecker H."/>
            <person name="Blugeon C."/>
            <person name="Boskovic J."/>
            <person name="Brandt P."/>
            <person name="Brueckner M."/>
            <person name="Buitrago M.J."/>
            <person name="Coster F."/>
            <person name="Delaveau T."/>
            <person name="del Rey F."/>
            <person name="Dujon B."/>
            <person name="Eide L.G."/>
            <person name="Garcia-Cantalejo J.M."/>
            <person name="Goffeau A."/>
            <person name="Gomez-Peris A."/>
            <person name="Granotier C."/>
            <person name="Hanemann V."/>
            <person name="Hankeln T."/>
            <person name="Hoheisel J.D."/>
            <person name="Jaeger W."/>
            <person name="Jimenez A."/>
            <person name="Jonniaux J.-L."/>
            <person name="Kraemer C."/>
            <person name="Kuester H."/>
            <person name="Laamanen P."/>
            <person name="Legros Y."/>
            <person name="Louis E.J."/>
            <person name="Moeller-Rieker S."/>
            <person name="Monnet A."/>
            <person name="Moro M."/>
            <person name="Mueller-Auer S."/>
            <person name="Nussbaumer B."/>
            <person name="Paricio N."/>
            <person name="Paulin L."/>
            <person name="Perea J."/>
            <person name="Perez-Alonso M."/>
            <person name="Perez-Ortin J.E."/>
            <person name="Pohl T.M."/>
            <person name="Prydz H."/>
            <person name="Purnelle B."/>
            <person name="Rasmussen S.W."/>
            <person name="Remacha M.A."/>
            <person name="Revuelta J.L."/>
            <person name="Rieger M."/>
            <person name="Salom D."/>
            <person name="Saluz H.P."/>
            <person name="Saiz J.E."/>
            <person name="Saren A.-M."/>
            <person name="Schaefer M."/>
            <person name="Scharfe M."/>
            <person name="Schmidt E.R."/>
            <person name="Schneider C."/>
            <person name="Scholler P."/>
            <person name="Schwarz S."/>
            <person name="Soler-Mira A."/>
            <person name="Urrestarazu L.A."/>
            <person name="Verhasselt P."/>
            <person name="Vissers S."/>
            <person name="Voet M."/>
            <person name="Volckaert G."/>
            <person name="Wagner G."/>
            <person name="Wambutt R."/>
            <person name="Wedler E."/>
            <person name="Wedler H."/>
            <person name="Woelfl S."/>
            <person name="Harris D.E."/>
            <person name="Bowman S."/>
            <person name="Brown D."/>
            <person name="Churcher C.M."/>
            <person name="Connor R."/>
            <person name="Dedman K."/>
            <person name="Gentles S."/>
            <person name="Hamlin N."/>
            <person name="Hunt S."/>
            <person name="Jones L."/>
            <person name="McDonald S."/>
            <person name="Murphy L.D."/>
            <person name="Niblett D."/>
            <person name="Odell C."/>
            <person name="Oliver K."/>
            <person name="Rajandream M.A."/>
            <person name="Richards C."/>
            <person name="Shore L."/>
            <person name="Walsh S.V."/>
            <person name="Barrell B.G."/>
            <person name="Dietrich F.S."/>
            <person name="Mulligan J.T."/>
            <person name="Allen E."/>
            <person name="Araujo R."/>
            <person name="Aviles E."/>
            <person name="Berno A."/>
            <person name="Carpenter J."/>
            <person name="Chen E."/>
            <person name="Cherry J.M."/>
            <person name="Chung E."/>
            <person name="Duncan M."/>
            <person name="Hunicke-Smith S."/>
            <person name="Hyman R.W."/>
            <person name="Komp C."/>
            <person name="Lashkari D."/>
            <person name="Lew H."/>
            <person name="Lin D."/>
            <person name="Mosedale D."/>
            <person name="Nakahara K."/>
            <person name="Namath A."/>
            <person name="Oefner P."/>
            <person name="Oh C."/>
            <person name="Petel F.X."/>
            <person name="Roberts D."/>
            <person name="Schramm S."/>
            <person name="Schroeder M."/>
            <person name="Shogren T."/>
            <person name="Shroff N."/>
            <person name="Winant A."/>
            <person name="Yelton M.A."/>
            <person name="Botstein D."/>
            <person name="Davis R.W."/>
            <person name="Johnston M."/>
            <person name="Andrews S."/>
            <person name="Brinkman R."/>
            <person name="Cooper J."/>
            <person name="Ding H."/>
            <person name="Du Z."/>
            <person name="Favello A."/>
            <person name="Fulton L."/>
            <person name="Gattung S."/>
            <person name="Greco T."/>
            <person name="Hallsworth K."/>
            <person name="Hawkins J."/>
            <person name="Hillier L.W."/>
            <person name="Jier M."/>
            <person name="Johnson D."/>
            <person name="Johnston L."/>
            <person name="Kirsten J."/>
            <person name="Kucaba T."/>
            <person name="Langston Y."/>
            <person name="Latreille P."/>
            <person name="Le T."/>
            <person name="Mardis E."/>
            <person name="Menezes S."/>
            <person name="Miller N."/>
            <person name="Nhan M."/>
            <person name="Pauley A."/>
            <person name="Peluso D."/>
            <person name="Rifkin L."/>
            <person name="Riles L."/>
            <person name="Taich A."/>
            <person name="Trevaskis E."/>
            <person name="Vignati D."/>
            <person name="Wilcox L."/>
            <person name="Wohldman P."/>
            <person name="Vaudin M."/>
            <person name="Wilson R."/>
            <person name="Waterston R."/>
            <person name="Albermann K."/>
            <person name="Hani J."/>
            <person name="Heumann K."/>
            <person name="Kleine K."/>
            <person name="Mewes H.-W."/>
            <person name="Zollner A."/>
            <person name="Zaccaria P."/>
        </authorList>
    </citation>
    <scope>NUCLEOTIDE SEQUENCE [LARGE SCALE GENOMIC DNA]</scope>
    <source>
        <strain>ATCC 204508 / S288c</strain>
    </source>
</reference>
<reference key="2">
    <citation type="journal article" date="2014" name="G3 (Bethesda)">
        <title>The reference genome sequence of Saccharomyces cerevisiae: Then and now.</title>
        <authorList>
            <person name="Engel S.R."/>
            <person name="Dietrich F.S."/>
            <person name="Fisk D.G."/>
            <person name="Binkley G."/>
            <person name="Balakrishnan R."/>
            <person name="Costanzo M.C."/>
            <person name="Dwight S.S."/>
            <person name="Hitz B.C."/>
            <person name="Karra K."/>
            <person name="Nash R.S."/>
            <person name="Weng S."/>
            <person name="Wong E.D."/>
            <person name="Lloyd P."/>
            <person name="Skrzypek M.S."/>
            <person name="Miyasato S.R."/>
            <person name="Simison M."/>
            <person name="Cherry J.M."/>
        </authorList>
    </citation>
    <scope>GENOME REANNOTATION</scope>
    <source>
        <strain>ATCC 204508 / S288c</strain>
    </source>
</reference>
<reference key="3">
    <citation type="journal article" date="1998" name="Cell">
        <title>Human TAF(II)28 and TAF(II)18 interact through a histone fold encoded by atypical evolutionary conserved motifs also found in the SPT3 family.</title>
        <authorList>
            <person name="Birck C."/>
            <person name="Poch O."/>
            <person name="Romier C."/>
            <person name="Ruff M."/>
            <person name="Mengus G."/>
            <person name="Lavigne A.C."/>
            <person name="Davidson I."/>
            <person name="Moras D."/>
        </authorList>
    </citation>
    <scope>FUNCTION</scope>
    <scope>TAF-TAF INTERACTION THROUGH HISTONE-FOLD DOMAIN</scope>
</reference>
<reference key="4">
    <citation type="journal article" date="1998" name="Cell">
        <title>A subset of TAF(II)s are integral components of the SAGA complex required for nucleosome acetylation and transcriptional stimulation.</title>
        <authorList>
            <person name="Grant P.A."/>
            <person name="Schieltz D."/>
            <person name="Pray-Grant M.G."/>
            <person name="Steger D.J."/>
            <person name="Reese J.C."/>
            <person name="Yates J.R. III"/>
            <person name="Workman J.L."/>
        </authorList>
    </citation>
    <scope>FUNCTION</scope>
    <scope>IDENTIFICATION IN THE SAGA COMPLEX</scope>
    <scope>IDENTIFICATION BY MASS SPECTROMETRY</scope>
</reference>
<reference key="5">
    <citation type="journal article" date="1999" name="J. Biol. Chem.">
        <title>Expanded lysine acetylation specificity of Gcn5 in native complexes.</title>
        <authorList>
            <person name="Grant P.A."/>
            <person name="Eberharter A."/>
            <person name="John S."/>
            <person name="Cook R.G."/>
            <person name="Turner B.M."/>
            <person name="Workman J.L."/>
        </authorList>
    </citation>
    <scope>FUNCTION IN HISTONE ACETYLATION AT THE SAGA COMPLEX</scope>
</reference>
<reference key="6">
    <citation type="journal article" date="2000" name="J. Biol. Chem.">
        <title>Identification of two novel TAF subunits of the yeast Saccharomyces cerevisiae TFIID complex.</title>
        <authorList>
            <person name="Sanders S.L."/>
            <person name="Weil P.A."/>
        </authorList>
    </citation>
    <scope>FUNCTION</scope>
    <scope>IDENTIFICATION IN THE TFIID COMPLEX</scope>
</reference>
<reference key="7">
    <citation type="journal article" date="2000" name="J. Biol. Chem.">
        <title>Identification of a yeast transcription factor IID subunit, TSG2/TAF48.</title>
        <authorList>
            <person name="Reese J.C."/>
            <person name="Zhang Z."/>
            <person name="Kurpad H."/>
        </authorList>
    </citation>
    <scope>FUNCTION</scope>
</reference>
<reference key="8">
    <citation type="journal article" date="2000" name="Nature">
        <title>Redundant roles for the TFIID and SAGA complexes in global transcription.</title>
        <authorList>
            <person name="Lee T.I."/>
            <person name="Causton H.C."/>
            <person name="Holstege F.C."/>
            <person name="Shen W.C."/>
            <person name="Hannett N."/>
            <person name="Jennings E.G."/>
            <person name="Winston F."/>
            <person name="Green M.R."/>
            <person name="Young R.A."/>
        </authorList>
    </citation>
    <scope>FUNCTION</scope>
</reference>
<reference key="9">
    <citation type="journal article" date="2001" name="Mol. Cell. Biol.">
        <title>Histone folds mediate selective heterodimerization of yeast TAF(II)25 with TFIID components yTAF(II)47 and yTAF(II)65 and with SAGA component ySPT7.</title>
        <authorList>
            <person name="Gangloff Y.G."/>
            <person name="Sanders S.L."/>
            <person name="Romier C."/>
            <person name="Kirschner D.B."/>
            <person name="Weil P.A."/>
            <person name="Tora L."/>
            <person name="Davidson I."/>
        </authorList>
    </citation>
    <scope>FUNCTION</scope>
    <scope>INTERACTION IN TFIID AND SAGA</scope>
</reference>
<reference key="10">
    <citation type="journal article" date="2001" name="Trends Biochem. Sci.">
        <title>The histone fold is a key structural motif of transcription factor TFIID.</title>
        <authorList>
            <person name="Gangloff Y.G."/>
            <person name="Romier C."/>
            <person name="Thuault S."/>
            <person name="Werten S."/>
            <person name="Davidson I."/>
        </authorList>
    </citation>
    <scope>FUNCTION</scope>
    <scope>HISTONE-FOLD DOMAIN CHARACTERIZATION</scope>
</reference>
<reference key="11">
    <citation type="journal article" date="2001" name="Nat. Struct. Biol.">
        <title>A histone fold TAF octamer within the yeast TFIID transcriptional coactivator.</title>
        <authorList>
            <person name="Selleck W."/>
            <person name="Howley R."/>
            <person name="Fang Q."/>
            <person name="Podolny V."/>
            <person name="Fried M.G."/>
            <person name="Buratowski S."/>
            <person name="Tan S."/>
        </authorList>
    </citation>
    <scope>FUNCTION</scope>
    <scope>TAF OCTAMER FORMATION</scope>
</reference>
<reference key="12">
    <citation type="journal article" date="2002" name="Proc. Natl. Acad. Sci. U.S.A.">
        <title>SALSA, a variant of yeast SAGA, contains truncated Spt7, which correlates with activated transcription.</title>
        <authorList>
            <person name="Sterner D.E."/>
            <person name="Belotserkovskaya R."/>
            <person name="Berger S.L."/>
        </authorList>
    </citation>
    <scope>IDENTIFICATION IN THE SALSA COMPLEX</scope>
</reference>
<reference key="13">
    <citation type="journal article" date="2002" name="Mol. Cell. Biol.">
        <title>Proteomics of the eukaryotic transcription machinery: identification of proteins associated with components of yeast TFIID by multidimensional mass spectrometry.</title>
        <authorList>
            <person name="Sanders S.L."/>
            <person name="Jennings J."/>
            <person name="Canutescu A."/>
            <person name="Link A.J."/>
            <person name="Weil P.A."/>
        </authorList>
    </citation>
    <scope>FUNCTION</scope>
    <scope>IDENTIFICATION IN THE SAGA COMPLEX</scope>
</reference>
<reference key="14">
    <citation type="journal article" date="2002" name="Mol. Cell. Biol.">
        <title>Molecular characterization of Saccharomyces cerevisiae TFIID.</title>
        <authorList>
            <person name="Sanders S.L."/>
            <person name="Garbett K.A."/>
            <person name="Weil P.A."/>
        </authorList>
    </citation>
    <scope>FUNCTION</scope>
    <scope>TFIID STOICHIOMETRY</scope>
</reference>
<reference key="15">
    <citation type="journal article" date="2002" name="Mol. Cell. Biol.">
        <title>The novel SLIK histone acetyltransferase complex functions in the yeast retrograde response pathway.</title>
        <authorList>
            <person name="Pray-Grant M.G."/>
            <person name="Schieltz D."/>
            <person name="McMahon S.J."/>
            <person name="Wood J.M."/>
            <person name="Kennedy E.L."/>
            <person name="Cook R.G."/>
            <person name="Workman J.L."/>
            <person name="Yates J.R. III"/>
            <person name="Grant P.A."/>
        </authorList>
    </citation>
    <scope>IDENTIFICATION IN THE SLIK COMPLEX</scope>
</reference>
<reference key="16">
    <citation type="journal article" date="2002" name="Plant Mol. Biol.">
        <title>Multi-protein complexes in eukaryotic gene transcription.</title>
        <authorList>
            <person name="Martinez E."/>
        </authorList>
    </citation>
    <scope>FUNCTION</scope>
</reference>
<reference key="17">
    <citation type="journal article" date="2003" name="Nature">
        <title>Global analysis of protein localization in budding yeast.</title>
        <authorList>
            <person name="Huh W.-K."/>
            <person name="Falvo J.V."/>
            <person name="Gerke L.C."/>
            <person name="Carroll A.S."/>
            <person name="Howson R.W."/>
            <person name="Weissman J.S."/>
            <person name="O'Shea E.K."/>
        </authorList>
    </citation>
    <scope>SUBCELLULAR LOCATION [LARGE SCALE ANALYSIS]</scope>
</reference>
<reference key="18">
    <citation type="journal article" date="2003" name="Nature">
        <title>Global analysis of protein expression in yeast.</title>
        <authorList>
            <person name="Ghaemmaghami S."/>
            <person name="Huh W.-K."/>
            <person name="Bower K."/>
            <person name="Howson R.W."/>
            <person name="Belle A."/>
            <person name="Dephoure N."/>
            <person name="O'Shea E.K."/>
            <person name="Weissman J.S."/>
        </authorList>
    </citation>
    <scope>LEVEL OF PROTEIN EXPRESSION [LARGE SCALE ANALYSIS]</scope>
</reference>
<reference key="19">
    <citation type="journal article" date="2005" name="Nature">
        <title>Chd1 chromodomain links histone H3 methylation with SAGA- and SLIK-dependent acetylation.</title>
        <authorList>
            <person name="Pray-Grant M.G."/>
            <person name="Daniel J.A."/>
            <person name="Schieltz D."/>
            <person name="Yates J.R. III"/>
            <person name="Grant P.A."/>
        </authorList>
    </citation>
    <scope>IDENTIFICATION IN THE SLIK COMPLEX</scope>
</reference>
<reference key="20">
    <citation type="journal article" date="2002" name="EMBO J.">
        <title>Mapping histone fold TAFs within yeast TFIID.</title>
        <authorList>
            <person name="Leurent C."/>
            <person name="Sanders S.L."/>
            <person name="Ruhlmann C."/>
            <person name="Mallouh V."/>
            <person name="Weil P.A."/>
            <person name="Kirschner D.B."/>
            <person name="Tora L."/>
            <person name="Schultz P."/>
        </authorList>
    </citation>
    <scope>3D-STRUCTURE</scope>
    <scope>ELECTRON MICROSCOPY OF TFIID</scope>
</reference>
<reference key="21">
    <citation type="journal article" date="2003" name="EMBO J.">
        <title>Systematic analysis of essential yeast TAFs in genome-wide transcription and preinitiation complex assembly.</title>
        <authorList>
            <person name="Shen W.C."/>
            <person name="Bhaumik S.R."/>
            <person name="Causton H.C."/>
            <person name="Simon I."/>
            <person name="Zhu X."/>
            <person name="Jennings E.G."/>
            <person name="Wang T.H."/>
            <person name="Young R.A."/>
            <person name="Green M.R."/>
        </authorList>
    </citation>
    <scope>FUNCTION</scope>
</reference>
<reference key="22">
    <citation type="journal article" date="2003" name="J. Biol. Chem.">
        <title>Use of a genetically introduced cross-linker to identify interaction sites of acidic activators within native transcription factor IID and SAGA.</title>
        <authorList>
            <person name="Klein J."/>
            <person name="Nolden M."/>
            <person name="Sanders S.L."/>
            <person name="Kirchner J."/>
            <person name="Weil P.A."/>
            <person name="Melcher K."/>
        </authorList>
    </citation>
    <scope>FUNCTION</scope>
</reference>
<reference key="23">
    <citation type="journal article" date="2004" name="J. Biol. Chem.">
        <title>Purification of active TFIID from Saccharomyces cerevisiae. Extensive promoter contacts and co-activator function.</title>
        <authorList>
            <person name="Auty R."/>
            <person name="Steen H."/>
            <person name="Myers L.C."/>
            <person name="Persinger J."/>
            <person name="Bartholomew B."/>
            <person name="Gygi S.P."/>
            <person name="Buratowski S."/>
        </authorList>
    </citation>
    <scope>FUNCTION IN THE TFIID COMPLEX</scope>
</reference>
<reference key="24">
    <citation type="journal article" date="2007" name="J. Proteome Res.">
        <title>Large-scale phosphorylation analysis of alpha-factor-arrested Saccharomyces cerevisiae.</title>
        <authorList>
            <person name="Li X."/>
            <person name="Gerber S.A."/>
            <person name="Rudner A.D."/>
            <person name="Beausoleil S.A."/>
            <person name="Haas W."/>
            <person name="Villen J."/>
            <person name="Elias J.E."/>
            <person name="Gygi S.P."/>
        </authorList>
    </citation>
    <scope>PHOSPHORYLATION [LARGE SCALE ANALYSIS] AT SER-286</scope>
    <scope>IDENTIFICATION BY MASS SPECTROMETRY [LARGE SCALE ANALYSIS]</scope>
    <source>
        <strain>ADR376</strain>
    </source>
</reference>
<reference key="25">
    <citation type="journal article" date="2008" name="Mol. Cell. Proteomics">
        <title>A multidimensional chromatography technology for in-depth phosphoproteome analysis.</title>
        <authorList>
            <person name="Albuquerque C.P."/>
            <person name="Smolka M.B."/>
            <person name="Payne S.H."/>
            <person name="Bafna V."/>
            <person name="Eng J."/>
            <person name="Zhou H."/>
        </authorList>
    </citation>
    <scope>PHOSPHORYLATION [LARGE SCALE ANALYSIS] AT SER-129</scope>
    <scope>IDENTIFICATION BY MASS SPECTROMETRY [LARGE SCALE ANALYSIS]</scope>
</reference>
<reference key="26">
    <citation type="journal article" date="2009" name="Science">
        <title>Global analysis of Cdk1 substrate phosphorylation sites provides insights into evolution.</title>
        <authorList>
            <person name="Holt L.J."/>
            <person name="Tuch B.B."/>
            <person name="Villen J."/>
            <person name="Johnson A.D."/>
            <person name="Gygi S.P."/>
            <person name="Morgan D.O."/>
        </authorList>
    </citation>
    <scope>PHOSPHORYLATION [LARGE SCALE ANALYSIS] AT SER-129 AND SER-286</scope>
    <scope>IDENTIFICATION BY MASS SPECTROMETRY [LARGE SCALE ANALYSIS]</scope>
</reference>
<reference key="27">
    <citation type="journal article" date="2011" name="Mol. Syst. Biol.">
        <title>Combinatorial depletion analysis to assemble the network architecture of the SAGA and ADA chromatin remodeling complexes.</title>
        <authorList>
            <person name="Lee K.K."/>
            <person name="Sardiu M.E."/>
            <person name="Swanson S.K."/>
            <person name="Gilmore J.M."/>
            <person name="Torok M."/>
            <person name="Grant P.A."/>
            <person name="Florens L."/>
            <person name="Workman J.L."/>
            <person name="Washburn M.P."/>
        </authorList>
    </citation>
    <scope>SUBUNIT</scope>
</reference>
<reference key="28">
    <citation type="journal article" date="2012" name="Proc. Natl. Acad. Sci. U.S.A.">
        <title>N-terminal acetylome analyses and functional insights of the N-terminal acetyltransferase NatB.</title>
        <authorList>
            <person name="Van Damme P."/>
            <person name="Lasa M."/>
            <person name="Polevoda B."/>
            <person name="Gazquez C."/>
            <person name="Elosegui-Artola A."/>
            <person name="Kim D.S."/>
            <person name="De Juan-Pardo E."/>
            <person name="Demeyer K."/>
            <person name="Hole K."/>
            <person name="Larrea E."/>
            <person name="Timmerman E."/>
            <person name="Prieto J."/>
            <person name="Arnesen T."/>
            <person name="Sherman F."/>
            <person name="Gevaert K."/>
            <person name="Aldabe R."/>
        </authorList>
    </citation>
    <scope>ACETYLATION [LARGE SCALE ANALYSIS] AT SER-2</scope>
    <scope>CLEAVAGE OF INITIATOR METHIONINE [LARGE SCALE ANALYSIS]</scope>
    <scope>IDENTIFICATION BY MASS SPECTROMETRY [LARGE SCALE ANALYSIS]</scope>
</reference>
<reference key="29">
    <citation type="journal article" date="2014" name="EMBO J.">
        <title>Architecture of the Saccharomyces cerevisiae SAGA transcription coactivator complex.</title>
        <authorList>
            <person name="Han Y."/>
            <person name="Luo J."/>
            <person name="Ranish J."/>
            <person name="Hahn S."/>
        </authorList>
    </citation>
    <scope>SUBUNIT</scope>
</reference>
<reference key="30">
    <citation type="journal article" date="2017" name="Mol. Cell">
        <title>SAGA is a general cofactor for RNA polymerase II transcription.</title>
        <authorList>
            <person name="Baptista T."/>
            <person name="Gruenberg S."/>
            <person name="Minoungou N."/>
            <person name="Koster M.J.E."/>
            <person name="Timmers H.T.M."/>
            <person name="Hahn S."/>
            <person name="Devys D."/>
            <person name="Tora L."/>
        </authorList>
    </citation>
    <scope>FUNCTION</scope>
</reference>
<reference key="31">
    <citation type="journal article" date="2021" name="J. Biol. Chem.">
        <title>SAGA and SAGA-like SLIK transcriptional coactivators are structurally and biochemically equivalent.</title>
        <authorList>
            <person name="Adamus K."/>
            <person name="Reboul C."/>
            <person name="Voss J."/>
            <person name="Huang C."/>
            <person name="Schittenhelm R.B."/>
            <person name="Le S.N."/>
            <person name="Ellisdon A.M."/>
            <person name="Elmlund H."/>
            <person name="Boudes M."/>
            <person name="Elmlund D."/>
        </authorList>
    </citation>
    <scope>FUNCTION</scope>
    <scope>SUBUNIT</scope>
</reference>
<reference key="32">
    <citation type="journal article" date="2004" name="Mol. Cell">
        <title>Molecular architecture of the S. cerevisiae SAGA complex.</title>
        <authorList>
            <person name="Wu P.Y."/>
            <person name="Ruhlmann C."/>
            <person name="Winston F."/>
            <person name="Schultz P."/>
        </authorList>
    </citation>
    <scope>3D-STRUCTURE MODELING OF THE SAGA COMPLEX</scope>
</reference>
<reference evidence="29 30 31" key="33">
    <citation type="journal article" date="2020" name="Nature">
        <title>Structure of the transcription coactivator SAGA.</title>
        <authorList>
            <person name="Wang H."/>
            <person name="Dienemann C."/>
            <person name="Stutzer A."/>
            <person name="Urlaub H."/>
            <person name="Cheung A.C.M."/>
            <person name="Cramer P."/>
        </authorList>
    </citation>
    <scope>STRUCTURE BY ELECTRON MICROSCOPY (3.30 ANGSTROMS) IN THE SAGA COMPLEX</scope>
</reference>
<evidence type="ECO:0000255" key="1"/>
<evidence type="ECO:0000256" key="2">
    <source>
        <dbReference type="SAM" id="MobiDB-lite"/>
    </source>
</evidence>
<evidence type="ECO:0000269" key="3">
    <source>
    </source>
</evidence>
<evidence type="ECO:0000269" key="4">
    <source>
    </source>
</evidence>
<evidence type="ECO:0000269" key="5">
    <source>
    </source>
</evidence>
<evidence type="ECO:0000269" key="6">
    <source>
    </source>
</evidence>
<evidence type="ECO:0000269" key="7">
    <source>
    </source>
</evidence>
<evidence type="ECO:0000269" key="8">
    <source>
    </source>
</evidence>
<evidence type="ECO:0000269" key="9">
    <source>
    </source>
</evidence>
<evidence type="ECO:0000269" key="10">
    <source>
    </source>
</evidence>
<evidence type="ECO:0000269" key="11">
    <source>
    </source>
</evidence>
<evidence type="ECO:0000269" key="12">
    <source>
    </source>
</evidence>
<evidence type="ECO:0000269" key="13">
    <source>
    </source>
</evidence>
<evidence type="ECO:0000269" key="14">
    <source>
    </source>
</evidence>
<evidence type="ECO:0000269" key="15">
    <source>
    </source>
</evidence>
<evidence type="ECO:0000269" key="16">
    <source>
    </source>
</evidence>
<evidence type="ECO:0000269" key="17">
    <source>
    </source>
</evidence>
<evidence type="ECO:0000269" key="18">
    <source>
    </source>
</evidence>
<evidence type="ECO:0000269" key="19">
    <source>
    </source>
</evidence>
<evidence type="ECO:0000269" key="20">
    <source>
    </source>
</evidence>
<evidence type="ECO:0000269" key="21">
    <source>
    </source>
</evidence>
<evidence type="ECO:0000269" key="22">
    <source>
    </source>
</evidence>
<evidence type="ECO:0000269" key="23">
    <source>
    </source>
</evidence>
<evidence type="ECO:0000269" key="24">
    <source>
    </source>
</evidence>
<evidence type="ECO:0000269" key="25">
    <source>
    </source>
</evidence>
<evidence type="ECO:0000269" key="26">
    <source>
    </source>
</evidence>
<evidence type="ECO:0000269" key="27">
    <source>
    </source>
</evidence>
<evidence type="ECO:0000305" key="28"/>
<evidence type="ECO:0007744" key="29">
    <source>
        <dbReference type="PDB" id="6T9I"/>
    </source>
</evidence>
<evidence type="ECO:0007744" key="30">
    <source>
        <dbReference type="PDB" id="6T9J"/>
    </source>
</evidence>
<evidence type="ECO:0007744" key="31">
    <source>
        <dbReference type="PDB" id="6T9K"/>
    </source>
</evidence>
<evidence type="ECO:0007744" key="32">
    <source>
    </source>
</evidence>
<evidence type="ECO:0007744" key="33">
    <source>
    </source>
</evidence>
<evidence type="ECO:0007744" key="34">
    <source>
    </source>
</evidence>
<evidence type="ECO:0007744" key="35">
    <source>
    </source>
</evidence>
<evidence type="ECO:0007829" key="36">
    <source>
        <dbReference type="PDB" id="6T9J"/>
    </source>
</evidence>
<evidence type="ECO:0007829" key="37">
    <source>
        <dbReference type="PDB" id="6T9K"/>
    </source>
</evidence>
<protein>
    <recommendedName>
        <fullName>SAGA complex/transcription factor TFIID complex subunit TAF12</fullName>
    </recommendedName>
    <alternativeName>
        <fullName>TAFII-61</fullName>
        <shortName>TAFII61</shortName>
    </alternativeName>
    <alternativeName>
        <fullName>TAFII-68</fullName>
        <shortName>TAFII68</shortName>
    </alternativeName>
    <alternativeName>
        <fullName>TBP-associated factor 12</fullName>
    </alternativeName>
    <alternativeName>
        <fullName>TBP-associated factor 61 kDa</fullName>
    </alternativeName>
    <alternativeName>
        <fullName>Transcription initiation factor TFIID subunit 12</fullName>
    </alternativeName>
</protein>
<keyword id="KW-0002">3D-structure</keyword>
<keyword id="KW-0007">Acetylation</keyword>
<keyword id="KW-0175">Coiled coil</keyword>
<keyword id="KW-0539">Nucleus</keyword>
<keyword id="KW-0597">Phosphoprotein</keyword>
<keyword id="KW-1185">Reference proteome</keyword>
<keyword id="KW-0804">Transcription</keyword>
<keyword id="KW-0805">Transcription regulation</keyword>
<dbReference type="EMBL" id="Z50046">
    <property type="protein sequence ID" value="CAA90368.1"/>
    <property type="molecule type" value="Genomic_DNA"/>
</dbReference>
<dbReference type="EMBL" id="BK006938">
    <property type="protein sequence ID" value="DAA11988.1"/>
    <property type="molecule type" value="Genomic_DNA"/>
</dbReference>
<dbReference type="PIR" id="S57972">
    <property type="entry name" value="S57972"/>
</dbReference>
<dbReference type="RefSeq" id="NP_010429.1">
    <property type="nucleotide sequence ID" value="NM_001180452.1"/>
</dbReference>
<dbReference type="PDB" id="6T9I">
    <property type="method" value="EM"/>
    <property type="resolution" value="3.90 A"/>
    <property type="chains" value="I=1-539"/>
</dbReference>
<dbReference type="PDB" id="6T9J">
    <property type="method" value="EM"/>
    <property type="resolution" value="3.40 A"/>
    <property type="chains" value="I=1-539"/>
</dbReference>
<dbReference type="PDB" id="6T9K">
    <property type="method" value="EM"/>
    <property type="resolution" value="3.30 A"/>
    <property type="chains" value="I=1-539"/>
</dbReference>
<dbReference type="PDBsum" id="6T9I"/>
<dbReference type="PDBsum" id="6T9J"/>
<dbReference type="PDBsum" id="6T9K"/>
<dbReference type="EMDB" id="EMD-10412"/>
<dbReference type="EMDB" id="EMD-10413"/>
<dbReference type="EMDB" id="EMD-10414"/>
<dbReference type="SMR" id="Q03761"/>
<dbReference type="BioGRID" id="32199">
    <property type="interactions" value="788"/>
</dbReference>
<dbReference type="ComplexPortal" id="CPX-1642">
    <property type="entry name" value="General transcription factor complex TFIID"/>
</dbReference>
<dbReference type="ComplexPortal" id="CPX-656">
    <property type="entry name" value="SAGA complex"/>
</dbReference>
<dbReference type="ComplexPortal" id="CPX-675">
    <property type="entry name" value="SLIK (SAGA-like) complex"/>
</dbReference>
<dbReference type="DIP" id="DIP-1302N"/>
<dbReference type="FunCoup" id="Q03761">
    <property type="interactions" value="676"/>
</dbReference>
<dbReference type="IntAct" id="Q03761">
    <property type="interactions" value="123"/>
</dbReference>
<dbReference type="MINT" id="Q03761"/>
<dbReference type="STRING" id="4932.YDR145W"/>
<dbReference type="GlyGen" id="Q03761">
    <property type="glycosylation" value="2 sites, 1 O-linked glycan (2 sites)"/>
</dbReference>
<dbReference type="iPTMnet" id="Q03761"/>
<dbReference type="PaxDb" id="4932-YDR145W"/>
<dbReference type="PeptideAtlas" id="Q03761"/>
<dbReference type="EnsemblFungi" id="YDR145W_mRNA">
    <property type="protein sequence ID" value="YDR145W"/>
    <property type="gene ID" value="YDR145W"/>
</dbReference>
<dbReference type="GeneID" id="851723"/>
<dbReference type="KEGG" id="sce:YDR145W"/>
<dbReference type="AGR" id="SGD:S000002552"/>
<dbReference type="SGD" id="S000002552">
    <property type="gene designation" value="TAF12"/>
</dbReference>
<dbReference type="VEuPathDB" id="FungiDB:YDR145W"/>
<dbReference type="eggNOG" id="KOG1142">
    <property type="taxonomic scope" value="Eukaryota"/>
</dbReference>
<dbReference type="GeneTree" id="ENSGT00390000002144"/>
<dbReference type="HOGENOM" id="CLU_021602_0_0_1"/>
<dbReference type="InParanoid" id="Q03761"/>
<dbReference type="OMA" id="ADDFITN"/>
<dbReference type="OrthoDB" id="2193432at2759"/>
<dbReference type="BioCyc" id="YEAST:G3O-29742-MONOMER"/>
<dbReference type="Reactome" id="R-SCE-674695">
    <property type="pathway name" value="RNA Polymerase II Pre-transcription Events"/>
</dbReference>
<dbReference type="Reactome" id="R-SCE-73776">
    <property type="pathway name" value="RNA Polymerase II Promoter Escape"/>
</dbReference>
<dbReference type="Reactome" id="R-SCE-73779">
    <property type="pathway name" value="RNA Polymerase II Transcription Pre-Initiation And Promoter Opening"/>
</dbReference>
<dbReference type="Reactome" id="R-SCE-75953">
    <property type="pathway name" value="RNA Polymerase II Transcription Initiation"/>
</dbReference>
<dbReference type="Reactome" id="R-SCE-76042">
    <property type="pathway name" value="RNA Polymerase II Transcription Initiation And Promoter Clearance"/>
</dbReference>
<dbReference type="BioGRID-ORCS" id="851723">
    <property type="hits" value="3 hits in 10 CRISPR screens"/>
</dbReference>
<dbReference type="PRO" id="PR:Q03761"/>
<dbReference type="Proteomes" id="UP000002311">
    <property type="component" value="Chromosome IV"/>
</dbReference>
<dbReference type="RNAct" id="Q03761">
    <property type="molecule type" value="protein"/>
</dbReference>
<dbReference type="GO" id="GO:0005634">
    <property type="term" value="C:nucleus"/>
    <property type="evidence" value="ECO:0000303"/>
    <property type="project" value="ComplexPortal"/>
</dbReference>
<dbReference type="GO" id="GO:0005777">
    <property type="term" value="C:peroxisome"/>
    <property type="evidence" value="ECO:0007005"/>
    <property type="project" value="SGD"/>
</dbReference>
<dbReference type="GO" id="GO:0000124">
    <property type="term" value="C:SAGA complex"/>
    <property type="evidence" value="ECO:0000314"/>
    <property type="project" value="SGD"/>
</dbReference>
<dbReference type="GO" id="GO:0046695">
    <property type="term" value="C:SLIK (SAGA-like) complex"/>
    <property type="evidence" value="ECO:0000314"/>
    <property type="project" value="SGD"/>
</dbReference>
<dbReference type="GO" id="GO:0005669">
    <property type="term" value="C:transcription factor TFIID complex"/>
    <property type="evidence" value="ECO:0000314"/>
    <property type="project" value="SGD"/>
</dbReference>
<dbReference type="GO" id="GO:0003682">
    <property type="term" value="F:chromatin binding"/>
    <property type="evidence" value="ECO:0000314"/>
    <property type="project" value="SGD"/>
</dbReference>
<dbReference type="GO" id="GO:0003677">
    <property type="term" value="F:DNA binding"/>
    <property type="evidence" value="ECO:0000318"/>
    <property type="project" value="GO_Central"/>
</dbReference>
<dbReference type="GO" id="GO:0042802">
    <property type="term" value="F:identical protein binding"/>
    <property type="evidence" value="ECO:0000353"/>
    <property type="project" value="IntAct"/>
</dbReference>
<dbReference type="GO" id="GO:0060090">
    <property type="term" value="F:molecular adaptor activity"/>
    <property type="evidence" value="ECO:0000315"/>
    <property type="project" value="SGD"/>
</dbReference>
<dbReference type="GO" id="GO:0046982">
    <property type="term" value="F:protein heterodimerization activity"/>
    <property type="evidence" value="ECO:0007669"/>
    <property type="project" value="InterPro"/>
</dbReference>
<dbReference type="GO" id="GO:0061629">
    <property type="term" value="F:RNA polymerase II-specific DNA-binding transcription factor binding"/>
    <property type="evidence" value="ECO:0000314"/>
    <property type="project" value="SGD"/>
</dbReference>
<dbReference type="GO" id="GO:0017025">
    <property type="term" value="F:TBP-class protein binding"/>
    <property type="evidence" value="ECO:0000314"/>
    <property type="project" value="SGD"/>
</dbReference>
<dbReference type="GO" id="GO:0006325">
    <property type="term" value="P:chromatin organization"/>
    <property type="evidence" value="ECO:0000314"/>
    <property type="project" value="SGD"/>
</dbReference>
<dbReference type="GO" id="GO:0045944">
    <property type="term" value="P:positive regulation of transcription by RNA polymerase II"/>
    <property type="evidence" value="ECO:0000314"/>
    <property type="project" value="ComplexPortal"/>
</dbReference>
<dbReference type="GO" id="GO:0006357">
    <property type="term" value="P:regulation of transcription by RNA polymerase II"/>
    <property type="evidence" value="ECO:0000314"/>
    <property type="project" value="ComplexPortal"/>
</dbReference>
<dbReference type="GO" id="GO:0051123">
    <property type="term" value="P:RNA polymerase II preinitiation complex assembly"/>
    <property type="evidence" value="ECO:0000315"/>
    <property type="project" value="SGD"/>
</dbReference>
<dbReference type="GO" id="GO:0006366">
    <property type="term" value="P:transcription by RNA polymerase II"/>
    <property type="evidence" value="ECO:0000314"/>
    <property type="project" value="SGD"/>
</dbReference>
<dbReference type="CDD" id="cd07981">
    <property type="entry name" value="HFD_TAF12"/>
    <property type="match status" value="1"/>
</dbReference>
<dbReference type="FunFam" id="1.10.20.10:FF:000011">
    <property type="entry name" value="Transcription initiation factor TFIID subunit 12"/>
    <property type="match status" value="1"/>
</dbReference>
<dbReference type="Gene3D" id="1.10.20.10">
    <property type="entry name" value="Histone, subunit A"/>
    <property type="match status" value="1"/>
</dbReference>
<dbReference type="InterPro" id="IPR009072">
    <property type="entry name" value="Histone-fold"/>
</dbReference>
<dbReference type="InterPro" id="IPR037794">
    <property type="entry name" value="TAF12"/>
</dbReference>
<dbReference type="InterPro" id="IPR003228">
    <property type="entry name" value="TFIID_TAF12_dom"/>
</dbReference>
<dbReference type="PANTHER" id="PTHR12264">
    <property type="entry name" value="TRANSCRIPTION INITIATION FACTOR TFIID SUBUNIT 12"/>
    <property type="match status" value="1"/>
</dbReference>
<dbReference type="PANTHER" id="PTHR12264:SF21">
    <property type="entry name" value="TRANSCRIPTION INITIATION FACTOR TFIID SUBUNIT 12"/>
    <property type="match status" value="1"/>
</dbReference>
<dbReference type="Pfam" id="PF03847">
    <property type="entry name" value="TFIID_20kDa"/>
    <property type="match status" value="1"/>
</dbReference>
<dbReference type="SUPFAM" id="SSF81995">
    <property type="entry name" value="beta-sandwich domain of Sec23/24"/>
    <property type="match status" value="1"/>
</dbReference>
<dbReference type="SUPFAM" id="SSF47113">
    <property type="entry name" value="Histone-fold"/>
    <property type="match status" value="1"/>
</dbReference>
<name>TAF12_YEAST</name>